<comment type="function">
    <text evidence="4 5 6 7 8 9 10 11 13 15 16 17 18 19 22 23 24 25 26">Ubiquitin thioesterase that acts at the late endosome/prevacuolar compartment to recover ubiquitin from ubiquitinated membrane proteins en route to the vacuole. Also removes ubiquitin from soluble proteins targeted to proteasomes. Is essential to maintain a normal level of free ubiquitin. Involved in the ammonium-induced down-regulation of the GAP1 permease and the UME3 destruction in response to oxidative stress. Has a role in the RAD9 checkpoint response to TOP1 poisons. Required for promoting coordination of DNA replication and avoids DNA overreplication.</text>
</comment>
<comment type="catalytic activity">
    <reaction>
        <text>Thiol-dependent hydrolysis of ester, thioester, amide, peptide and isopeptide bonds formed by the C-terminal Gly of ubiquitin (a 76-residue protein attached to proteins as an intracellular targeting signal).</text>
        <dbReference type="EC" id="3.4.19.12"/>
    </reaction>
</comment>
<comment type="activity regulation">
    <text evidence="21">RFU1 is an inhibitor of deubiquitination activity.</text>
</comment>
<comment type="subunit">
    <text evidence="14 15 19 20 21">Interacts with BRO1, RFU1 and VPS32. Associates with the 26S proteasome.</text>
</comment>
<comment type="interaction">
    <interactant intactId="EBI-19840">
        <id>P32571</id>
    </interactant>
    <interactant intactId="EBI-3768">
        <id>P48582</id>
        <label>BRO1</label>
    </interactant>
    <organismsDiffer>false</organismsDiffer>
    <experiments>15</experiments>
</comment>
<comment type="interaction">
    <interactant intactId="EBI-19840">
        <id>P32571</id>
    </interactant>
    <interactant intactId="EBI-2353109">
        <id>Q08003</id>
        <label>RFU1</label>
    </interactant>
    <organismsDiffer>false</organismsDiffer>
    <experiments>2</experiments>
</comment>
<comment type="subcellular location">
    <subcellularLocation>
        <location>Cytoplasm</location>
    </subcellularLocation>
    <subcellularLocation>
        <location>Late endosome membrane</location>
        <topology>Peripheral membrane protein</topology>
    </subcellularLocation>
    <text>Recruited to the late endosome by BRO1.</text>
</comment>
<comment type="domain">
    <text evidence="17">Residues 1-208 are essential for the localization to the late endosome and constitute a late endosome localization (LEL) domain.</text>
</comment>
<comment type="miscellaneous">
    <text evidence="12">Present with 428 molecules/cell in log phase SD medium.</text>
</comment>
<comment type="similarity">
    <text evidence="27">Belongs to the peptidase C19 family.</text>
</comment>
<reference key="1">
    <citation type="journal article" date="1993" name="Nature">
        <title>The yeast DOA4 gene encodes a deubiquitinating enzyme related to a product of the human tre-2 oncogene.</title>
        <authorList>
            <person name="Papa F.R."/>
            <person name="Hochstrasser M."/>
        </authorList>
    </citation>
    <scope>NUCLEOTIDE SEQUENCE [GENOMIC DNA]</scope>
    <scope>FUNCTION</scope>
</reference>
<reference key="2">
    <citation type="submission" date="1993-01" db="EMBL/GenBank/DDBJ databases">
        <authorList>
            <person name="Latterich M."/>
        </authorList>
    </citation>
    <scope>NUCLEOTIDE SEQUENCE [GENOMIC DNA]</scope>
</reference>
<reference key="3">
    <citation type="journal article" date="1997" name="Nature">
        <title>The nucleotide sequence of Saccharomyces cerevisiae chromosome IV.</title>
        <authorList>
            <person name="Jacq C."/>
            <person name="Alt-Moerbe J."/>
            <person name="Andre B."/>
            <person name="Arnold W."/>
            <person name="Bahr A."/>
            <person name="Ballesta J.P.G."/>
            <person name="Bargues M."/>
            <person name="Baron L."/>
            <person name="Becker A."/>
            <person name="Biteau N."/>
            <person name="Bloecker H."/>
            <person name="Blugeon C."/>
            <person name="Boskovic J."/>
            <person name="Brandt P."/>
            <person name="Brueckner M."/>
            <person name="Buitrago M.J."/>
            <person name="Coster F."/>
            <person name="Delaveau T."/>
            <person name="del Rey F."/>
            <person name="Dujon B."/>
            <person name="Eide L.G."/>
            <person name="Garcia-Cantalejo J.M."/>
            <person name="Goffeau A."/>
            <person name="Gomez-Peris A."/>
            <person name="Granotier C."/>
            <person name="Hanemann V."/>
            <person name="Hankeln T."/>
            <person name="Hoheisel J.D."/>
            <person name="Jaeger W."/>
            <person name="Jimenez A."/>
            <person name="Jonniaux J.-L."/>
            <person name="Kraemer C."/>
            <person name="Kuester H."/>
            <person name="Laamanen P."/>
            <person name="Legros Y."/>
            <person name="Louis E.J."/>
            <person name="Moeller-Rieker S."/>
            <person name="Monnet A."/>
            <person name="Moro M."/>
            <person name="Mueller-Auer S."/>
            <person name="Nussbaumer B."/>
            <person name="Paricio N."/>
            <person name="Paulin L."/>
            <person name="Perea J."/>
            <person name="Perez-Alonso M."/>
            <person name="Perez-Ortin J.E."/>
            <person name="Pohl T.M."/>
            <person name="Prydz H."/>
            <person name="Purnelle B."/>
            <person name="Rasmussen S.W."/>
            <person name="Remacha M.A."/>
            <person name="Revuelta J.L."/>
            <person name="Rieger M."/>
            <person name="Salom D."/>
            <person name="Saluz H.P."/>
            <person name="Saiz J.E."/>
            <person name="Saren A.-M."/>
            <person name="Schaefer M."/>
            <person name="Scharfe M."/>
            <person name="Schmidt E.R."/>
            <person name="Schneider C."/>
            <person name="Scholler P."/>
            <person name="Schwarz S."/>
            <person name="Soler-Mira A."/>
            <person name="Urrestarazu L.A."/>
            <person name="Verhasselt P."/>
            <person name="Vissers S."/>
            <person name="Voet M."/>
            <person name="Volckaert G."/>
            <person name="Wagner G."/>
            <person name="Wambutt R."/>
            <person name="Wedler E."/>
            <person name="Wedler H."/>
            <person name="Woelfl S."/>
            <person name="Harris D.E."/>
            <person name="Bowman S."/>
            <person name="Brown D."/>
            <person name="Churcher C.M."/>
            <person name="Connor R."/>
            <person name="Dedman K."/>
            <person name="Gentles S."/>
            <person name="Hamlin N."/>
            <person name="Hunt S."/>
            <person name="Jones L."/>
            <person name="McDonald S."/>
            <person name="Murphy L.D."/>
            <person name="Niblett D."/>
            <person name="Odell C."/>
            <person name="Oliver K."/>
            <person name="Rajandream M.A."/>
            <person name="Richards C."/>
            <person name="Shore L."/>
            <person name="Walsh S.V."/>
            <person name="Barrell B.G."/>
            <person name="Dietrich F.S."/>
            <person name="Mulligan J.T."/>
            <person name="Allen E."/>
            <person name="Araujo R."/>
            <person name="Aviles E."/>
            <person name="Berno A."/>
            <person name="Carpenter J."/>
            <person name="Chen E."/>
            <person name="Cherry J.M."/>
            <person name="Chung E."/>
            <person name="Duncan M."/>
            <person name="Hunicke-Smith S."/>
            <person name="Hyman R.W."/>
            <person name="Komp C."/>
            <person name="Lashkari D."/>
            <person name="Lew H."/>
            <person name="Lin D."/>
            <person name="Mosedale D."/>
            <person name="Nakahara K."/>
            <person name="Namath A."/>
            <person name="Oefner P."/>
            <person name="Oh C."/>
            <person name="Petel F.X."/>
            <person name="Roberts D."/>
            <person name="Schramm S."/>
            <person name="Schroeder M."/>
            <person name="Shogren T."/>
            <person name="Shroff N."/>
            <person name="Winant A."/>
            <person name="Yelton M.A."/>
            <person name="Botstein D."/>
            <person name="Davis R.W."/>
            <person name="Johnston M."/>
            <person name="Andrews S."/>
            <person name="Brinkman R."/>
            <person name="Cooper J."/>
            <person name="Ding H."/>
            <person name="Du Z."/>
            <person name="Favello A."/>
            <person name="Fulton L."/>
            <person name="Gattung S."/>
            <person name="Greco T."/>
            <person name="Hallsworth K."/>
            <person name="Hawkins J."/>
            <person name="Hillier L.W."/>
            <person name="Jier M."/>
            <person name="Johnson D."/>
            <person name="Johnston L."/>
            <person name="Kirsten J."/>
            <person name="Kucaba T."/>
            <person name="Langston Y."/>
            <person name="Latreille P."/>
            <person name="Le T."/>
            <person name="Mardis E."/>
            <person name="Menezes S."/>
            <person name="Miller N."/>
            <person name="Nhan M."/>
            <person name="Pauley A."/>
            <person name="Peluso D."/>
            <person name="Rifkin L."/>
            <person name="Riles L."/>
            <person name="Taich A."/>
            <person name="Trevaskis E."/>
            <person name="Vignati D."/>
            <person name="Wilcox L."/>
            <person name="Wohldman P."/>
            <person name="Vaudin M."/>
            <person name="Wilson R."/>
            <person name="Waterston R."/>
            <person name="Albermann K."/>
            <person name="Hani J."/>
            <person name="Heumann K."/>
            <person name="Kleine K."/>
            <person name="Mewes H.-W."/>
            <person name="Zollner A."/>
            <person name="Zaccaria P."/>
        </authorList>
    </citation>
    <scope>NUCLEOTIDE SEQUENCE [LARGE SCALE GENOMIC DNA]</scope>
    <source>
        <strain>ATCC 204508 / S288c</strain>
    </source>
</reference>
<reference key="4">
    <citation type="journal article" date="2014" name="G3 (Bethesda)">
        <title>The reference genome sequence of Saccharomyces cerevisiae: Then and now.</title>
        <authorList>
            <person name="Engel S.R."/>
            <person name="Dietrich F.S."/>
            <person name="Fisk D.G."/>
            <person name="Binkley G."/>
            <person name="Balakrishnan R."/>
            <person name="Costanzo M.C."/>
            <person name="Dwight S.S."/>
            <person name="Hitz B.C."/>
            <person name="Karra K."/>
            <person name="Nash R.S."/>
            <person name="Weng S."/>
            <person name="Wong E.D."/>
            <person name="Lloyd P."/>
            <person name="Skrzypek M.S."/>
            <person name="Miyasato S.R."/>
            <person name="Simison M."/>
            <person name="Cherry J.M."/>
        </authorList>
    </citation>
    <scope>GENOME REANNOTATION</scope>
    <source>
        <strain>ATCC 204508 / S288c</strain>
    </source>
</reference>
<reference key="5">
    <citation type="journal article" date="1996" name="Yeast">
        <title>Nucleotide sequence analysis of a 32,500 bp region of the right arm of Saccharomyces cerevisiae chromosome IV.</title>
        <authorList>
            <person name="Brandt P."/>
            <person name="Ramlow S."/>
            <person name="Otto B."/>
            <person name="Bloecker H."/>
        </authorList>
    </citation>
    <scope>NUCLEOTIDE SEQUENCE [GENOMIC DNA] OF 36-926</scope>
    <source>
        <strain>ATCC 204508 / S288c</strain>
    </source>
</reference>
<reference key="6">
    <citation type="journal article" date="1996" name="Mol. Cell. Biol.">
        <title>Coordinating DNA replication to produce one copy of the genome requires genes that act in ubiquitin metabolism.</title>
        <authorList>
            <person name="Singer J.D."/>
            <person name="Manning B.M."/>
            <person name="Formosa T."/>
        </authorList>
    </citation>
    <scope>FUNCTION</scope>
</reference>
<reference key="7">
    <citation type="journal article" date="1997" name="EMBO J.">
        <title>Ubiquitin lys63 is involved in ubiquitination of a yeast plasma membrane protein.</title>
        <authorList>
            <person name="Galan J.-M."/>
            <person name="Haguenauer-Tsapis R."/>
        </authorList>
    </citation>
    <scope>FUNCTION</scope>
</reference>
<reference key="8">
    <citation type="journal article" date="1997" name="FEMS Microbiol. Lett.">
        <title>Catabolite inactivation of the yeast maltose transporter requires ubiquitin-ligase npi1/rsp5 and ubiquitin-hydrolase npi2/doa4.</title>
        <authorList>
            <person name="Lucero P."/>
            <person name="Lagunas R."/>
        </authorList>
    </citation>
    <scope>FUNCTION</scope>
</reference>
<reference key="9">
    <citation type="journal article" date="1998" name="Mol. Cell. Biol.">
        <title>Role for the ubiquitin-proteasome system in the vacuolar degradation of Ste6p, the a-factor transporter in Saccharomyces cerevisiae.</title>
        <authorList>
            <person name="Loayza D."/>
            <person name="Michaelis S."/>
        </authorList>
    </citation>
    <scope>FUNCTION</scope>
</reference>
<reference key="10">
    <citation type="journal article" date="1999" name="J. Cell Sci.">
        <title>NH4+-induced down-regulation of the Saccharomyces cerevisiae Gap1p permease involves its ubiquitination with lysine-63-linked chains.</title>
        <authorList>
            <person name="Springael J.-Y."/>
            <person name="Galan J.-M."/>
            <person name="Haguenauer-Tsapis R."/>
            <person name="Andre B."/>
        </authorList>
    </citation>
    <scope>FUNCTION</scope>
</reference>
<reference key="11">
    <citation type="journal article" date="1999" name="Mol. Biol. Cell">
        <title>Interaction of the Doa4 deubiquitinating enzyme with the yeast 26S proteasome.</title>
        <authorList>
            <person name="Papa F.R."/>
            <person name="Amerik A.Y."/>
            <person name="Hochstrasser M."/>
        </authorList>
    </citation>
    <scope>ASSOCIATION WITH THE 26S PROTEASOME</scope>
</reference>
<reference key="12">
    <citation type="journal article" date="1999" name="Mol. Biol. Cell">
        <title>The Doa4 deubiquitinating enzyme is required for ubiquitin homeostasis in yeast.</title>
        <authorList>
            <person name="Swaminathan S."/>
            <person name="Amerik A.Y."/>
            <person name="Hochstrasser M."/>
        </authorList>
    </citation>
    <scope>FUNCTION</scope>
</reference>
<reference key="13">
    <citation type="journal article" date="1999" name="Mol. Cell. Biol.">
        <title>Oxidative stress-induced destruction of the yeast C-type cyclin Ume3p requires phosphatidylinositol-specific phospholipase C and the 26S proteasome.</title>
        <authorList>
            <person name="Cooper K.F."/>
            <person name="Mallory M.J."/>
            <person name="Strich R."/>
        </authorList>
    </citation>
    <scope>FUNCTION</scope>
</reference>
<reference key="14">
    <citation type="journal article" date="2000" name="Mol. Biol. Cell">
        <title>The Doa4 deubiquitinating enzyme is functionally linked to the vacuolar protein-sorting and endocytic pathways.</title>
        <authorList>
            <person name="Amerik A.Y."/>
            <person name="Nowak J."/>
            <person name="Swaminathan S."/>
            <person name="Hochstrasser M."/>
        </authorList>
    </citation>
    <scope>FUNCTION</scope>
    <scope>SUBCELLULAR LOCATION</scope>
</reference>
<reference key="15">
    <citation type="journal article" date="2001" name="J. Bacteriol.">
        <title>Glucose-induced monoubiquitination of the Saccharomyces cerevisiae galactose transporter is sufficient to signal its internalization.</title>
        <authorList>
            <person name="Horak J."/>
            <person name="Wolf D.H."/>
        </authorList>
    </citation>
    <scope>FUNCTION</scope>
</reference>
<reference key="16">
    <citation type="journal article" date="2001" name="Mol. Biol. Cell">
        <title>Uptake of the ATP-binding cassette (ABC) transporter Ste6 into the yeast vacuole is blocked in the doa4 Mutant.</title>
        <authorList>
            <person name="Losko S."/>
            <person name="Kopp F."/>
            <person name="Kranz A."/>
            <person name="Koelling R."/>
        </authorList>
    </citation>
    <scope>FUNCTION</scope>
</reference>
<reference key="17">
    <citation type="journal article" date="2001" name="Mol. Cell. Biol.">
        <title>Deubiquitination step in the endocytic pathway of yeast plasma membrane proteins: crucial role of Doa4p ubiquitin isopeptidase.</title>
        <authorList>
            <person name="Dupre S."/>
            <person name="Haguenauer-Tsapis R."/>
        </authorList>
    </citation>
    <scope>FUNCTION</scope>
</reference>
<reference key="18">
    <citation type="journal article" date="2003" name="J. Biol. Chem.">
        <title>Permease recycling and ubiquitination status reveal a particular role for Bro1 in the multivesicular body pathway.</title>
        <authorList>
            <person name="Nikko E."/>
            <person name="Marini A.-M."/>
            <person name="Andre B."/>
        </authorList>
    </citation>
    <scope>FUNCTION</scope>
</reference>
<reference key="19">
    <citation type="journal article" date="2003" name="Nature">
        <title>Global analysis of protein localization in budding yeast.</title>
        <authorList>
            <person name="Huh W.-K."/>
            <person name="Falvo J.V."/>
            <person name="Gerke L.C."/>
            <person name="Carroll A.S."/>
            <person name="Howson R.W."/>
            <person name="Weissman J.S."/>
            <person name="O'Shea E.K."/>
        </authorList>
    </citation>
    <scope>SUBCELLULAR LOCATION [LARGE SCALE ANALYSIS]</scope>
</reference>
<reference key="20">
    <citation type="journal article" date="2003" name="Nature">
        <title>Global analysis of protein expression in yeast.</title>
        <authorList>
            <person name="Ghaemmaghami S."/>
            <person name="Huh W.-K."/>
            <person name="Bower K."/>
            <person name="Howson R.W."/>
            <person name="Belle A."/>
            <person name="Dephoure N."/>
            <person name="O'Shea E.K."/>
            <person name="Weissman J.S."/>
        </authorList>
    </citation>
    <scope>LEVEL OF PROTEIN EXPRESSION [LARGE SCALE ANALYSIS]</scope>
</reference>
<reference key="21">
    <citation type="journal article" date="2004" name="J. Biol. Chem.">
        <title>The deubiquitinating enzyme Doa4p protects cells from DNA topoisomerase I poisons.</title>
        <authorList>
            <person name="Fiorani P."/>
            <person name="Reid R.J.D."/>
            <person name="Schepis A."/>
            <person name="Jacquiau H.R."/>
            <person name="Guo H."/>
            <person name="Thimmaiah P."/>
            <person name="Benedetti P."/>
            <person name="Bjornsti M.-A."/>
        </authorList>
    </citation>
    <scope>FUNCTION</scope>
</reference>
<reference key="22">
    <citation type="journal article" date="2004" name="J. Cell Biol.">
        <title>Bro1 coordinates deubiquitination in the multivesicular body pathway by recruiting Doa4 to endosomes.</title>
        <authorList>
            <person name="Luhtala N."/>
            <person name="Odorizzi G."/>
        </authorList>
    </citation>
    <scope>FUNCTION</scope>
    <scope>SUBCELLULAR LOCATION</scope>
    <scope>INTERACTION WITH BRO1</scope>
</reference>
<reference key="23">
    <citation type="journal article" date="2004" name="Traffic">
        <title>Protein-protein interactions of ESCRT complexes in the yeast Saccharomyces cerevisiae.</title>
        <authorList>
            <person name="Bowers K."/>
            <person name="Lottridge J."/>
            <person name="Helliwell S.B."/>
            <person name="Goldthwaite L.M."/>
            <person name="Luzio J.P."/>
            <person name="Stevens T.H."/>
        </authorList>
    </citation>
    <scope>INTERACTION WITH VPS32</scope>
</reference>
<reference key="24">
    <citation type="journal article" date="2006" name="J. Cell Biol.">
        <title>Did2 coordinates Vps4-mediated dissociation of ESCRT-III from endosomes.</title>
        <authorList>
            <person name="Nickerson D.P."/>
            <person name="West M."/>
            <person name="Odorizzi G."/>
        </authorList>
    </citation>
    <scope>SUBCELLULAR LOCATION</scope>
</reference>
<reference key="25">
    <citation type="journal article" date="2006" name="J. Cell Biol.">
        <title>A conserved late endosome-targeting signal required for Doa4 deubiquitylating enzyme function.</title>
        <authorList>
            <person name="Amerik A.Y."/>
            <person name="Sindhi N."/>
            <person name="Hochstrasser M."/>
        </authorList>
    </citation>
    <scope>FUNCTION</scope>
    <scope>SUBCELLULAR LOCATION</scope>
    <scope>DOMAIN</scope>
</reference>
<reference key="26">
    <citation type="journal article" date="2006" name="Mol. Biol. Cell">
        <title>Amino acids regulate retrieval of the yeast general amino acid permease from the vacuolar targeting pathway.</title>
        <authorList>
            <person name="Rubio-Texeira M."/>
            <person name="Kaiser C.A."/>
        </authorList>
    </citation>
    <scope>FUNCTION</scope>
</reference>
<reference key="27">
    <citation type="journal article" date="2007" name="EMBO J.">
        <title>Dual mechanisms specify Doa4-mediated deubiquitination at multivesicular bodies.</title>
        <authorList>
            <person name="Richter C."/>
            <person name="West M."/>
            <person name="Odorizzi G."/>
        </authorList>
    </citation>
    <scope>FUNCTION</scope>
    <scope>SUBCELLULAR LOCATION</scope>
    <scope>INTERACTION WITH BRO1</scope>
    <scope>MUTAGENESIS OF CYS-571; TYR-826; PRO-827 AND LEU-829</scope>
</reference>
<reference key="28">
    <citation type="journal article" date="2007" name="Eukaryot. Cell">
        <title>Split-ubiquitin two-hybrid assay to analyze protein-protein interactions at the endosome: application to Saccharomyces cerevisiae Bro1 interacting with ESCRT complexes, the Doa4 ubiquitin hydrolase, and the Rsp5 ubiquitin ligase.</title>
        <authorList>
            <person name="Nikko E."/>
            <person name="Andre B."/>
        </authorList>
    </citation>
    <scope>INTERACTION WITH BRO1</scope>
    <scope>SUBCELLULAR LOCATION</scope>
</reference>
<reference key="29">
    <citation type="journal article" date="2007" name="Traffic">
        <title>Evidence for a direct role of the Doa4 deubiquitinating enzyme in protein sorting into the MVB pathway.</title>
        <authorList>
            <person name="Nikko E."/>
            <person name="Andre B."/>
        </authorList>
    </citation>
    <scope>FUNCTION</scope>
    <scope>MUTAGENESIS OF CYS-571</scope>
</reference>
<reference key="30">
    <citation type="journal article" date="2008" name="Mol. Cell. Proteomics">
        <title>A multidimensional chromatography technology for in-depth phosphoproteome analysis.</title>
        <authorList>
            <person name="Albuquerque C.P."/>
            <person name="Smolka M.B."/>
            <person name="Payne S.H."/>
            <person name="Bafna V."/>
            <person name="Eng J."/>
            <person name="Zhou H."/>
        </authorList>
    </citation>
    <scope>PHOSPHORYLATION [LARGE SCALE ANALYSIS] AT SER-443</scope>
    <scope>IDENTIFICATION BY MASS SPECTROMETRY [LARGE SCALE ANALYSIS]</scope>
</reference>
<reference key="31">
    <citation type="journal article" date="2009" name="Cell">
        <title>An inhibitor of a deubiquitinating enzyme regulates ubiquitin homeostasis.</title>
        <authorList>
            <person name="Kimura Y."/>
            <person name="Yashiroda H."/>
            <person name="Kudo T."/>
            <person name="Koitabashi S."/>
            <person name="Murata S."/>
            <person name="Kakizuka A."/>
            <person name="Tanaka K."/>
        </authorList>
    </citation>
    <scope>ACTIVITY REGULATION</scope>
    <scope>INTERACTION WITH RFU1</scope>
</reference>
<feature type="chain" id="PRO_0000080589" description="Ubiquitin carboxyl-terminal hydrolase 4">
    <location>
        <begin position="1"/>
        <end position="926"/>
    </location>
</feature>
<feature type="domain" description="Rhodanese" evidence="1">
    <location>
        <begin position="205"/>
        <end position="328"/>
    </location>
</feature>
<feature type="domain" description="USP">
    <location>
        <begin position="562"/>
        <end position="923"/>
    </location>
</feature>
<feature type="active site" description="Nucleophile">
    <location>
        <position position="571"/>
    </location>
</feature>
<feature type="active site" description="Proton acceptor" evidence="2 3">
    <location>
        <position position="880"/>
    </location>
</feature>
<feature type="modified residue" description="Phosphoserine" evidence="28">
    <location>
        <position position="443"/>
    </location>
</feature>
<feature type="mutagenesis site" description="Impairs deubiquitination activity and protein sorting into the MVB pathway." evidence="18 19">
    <original>C</original>
    <variation>S</variation>
    <variation>A</variation>
    <location>
        <position position="571"/>
    </location>
</feature>
<feature type="mutagenesis site" description="Impairs deubiquitination activity and binding to BRO1; when associated with A-827 and A-829." evidence="19">
    <original>Y</original>
    <variation>A</variation>
    <location>
        <position position="826"/>
    </location>
</feature>
<feature type="mutagenesis site" description="Impairs deubiquitination activity and binding to BRO1; when associated with A-826 and A-829." evidence="19">
    <original>P</original>
    <variation>A</variation>
    <location>
        <position position="827"/>
    </location>
</feature>
<feature type="mutagenesis site" description="Impairs deubiquitination activity and binding to BRO1; when associated with A-826 and A-827." evidence="19">
    <original>L</original>
    <variation>A</variation>
    <location>
        <position position="829"/>
    </location>
</feature>
<feature type="sequence conflict" description="In Ref. 2; AAA35105." evidence="27" ref="2">
    <original>Q</original>
    <variation>K</variation>
    <location>
        <position position="327"/>
    </location>
</feature>
<feature type="sequence conflict" description="In Ref. 2; AAA35105." evidence="27" ref="2">
    <original>I</original>
    <variation>F</variation>
    <location>
        <position position="345"/>
    </location>
</feature>
<feature type="sequence conflict" description="In Ref. 2; AAA35105." evidence="27" ref="2">
    <original>MLVA</original>
    <variation>TASW</variation>
    <location>
        <begin position="375"/>
        <end position="378"/>
    </location>
</feature>
<feature type="sequence conflict" description="In Ref. 2; AAA35105." evidence="27" ref="2">
    <original>N</original>
    <variation>I</variation>
    <location>
        <position position="383"/>
    </location>
</feature>
<feature type="sequence conflict" description="In Ref. 2; AAA35105." evidence="27" ref="2">
    <original>K</original>
    <variation>T</variation>
    <location>
        <position position="407"/>
    </location>
</feature>
<feature type="sequence conflict" description="In Ref. 2; AAA35105." evidence="27" ref="2">
    <original>LDHTDVTPTSSHNYDLDFAVGLENLGNS</original>
    <variation>FRSYEMLHQLLLIIMTLISRLVWENLEIP</variation>
    <location>
        <begin position="543"/>
        <end position="570"/>
    </location>
</feature>
<feature type="sequence conflict" description="In Ref. 2; AAA35105." evidence="27" ref="2">
    <original>I</original>
    <variation>T</variation>
    <location>
        <position position="580"/>
    </location>
</feature>
<feature type="sequence conflict" description="In Ref. 2; AAA35105." evidence="27" ref="2">
    <original>W</original>
    <variation>G</variation>
    <location>
        <position position="836"/>
    </location>
</feature>
<feature type="sequence conflict" description="In Ref. 2; AAA35105." evidence="27" ref="2">
    <original>D</original>
    <variation>N</variation>
    <location>
        <position position="897"/>
    </location>
</feature>
<keyword id="KW-0963">Cytoplasm</keyword>
<keyword id="KW-0967">Endosome</keyword>
<keyword id="KW-0378">Hydrolase</keyword>
<keyword id="KW-0472">Membrane</keyword>
<keyword id="KW-0597">Phosphoprotein</keyword>
<keyword id="KW-0645">Protease</keyword>
<keyword id="KW-1185">Reference proteome</keyword>
<keyword id="KW-0788">Thiol protease</keyword>
<keyword id="KW-0833">Ubl conjugation pathway</keyword>
<accession>P32571</accession>
<accession>D6VS55</accession>
<evidence type="ECO:0000255" key="1">
    <source>
        <dbReference type="PROSITE-ProRule" id="PRU00173"/>
    </source>
</evidence>
<evidence type="ECO:0000255" key="2">
    <source>
        <dbReference type="PROSITE-ProRule" id="PRU10092"/>
    </source>
</evidence>
<evidence type="ECO:0000255" key="3">
    <source>
        <dbReference type="PROSITE-ProRule" id="PRU10093"/>
    </source>
</evidence>
<evidence type="ECO:0000269" key="4">
    <source>
    </source>
</evidence>
<evidence type="ECO:0000269" key="5">
    <source>
    </source>
</evidence>
<evidence type="ECO:0000269" key="6">
    <source>
    </source>
</evidence>
<evidence type="ECO:0000269" key="7">
    <source>
    </source>
</evidence>
<evidence type="ECO:0000269" key="8">
    <source>
    </source>
</evidence>
<evidence type="ECO:0000269" key="9">
    <source>
    </source>
</evidence>
<evidence type="ECO:0000269" key="10">
    <source>
    </source>
</evidence>
<evidence type="ECO:0000269" key="11">
    <source>
    </source>
</evidence>
<evidence type="ECO:0000269" key="12">
    <source>
    </source>
</evidence>
<evidence type="ECO:0000269" key="13">
    <source>
    </source>
</evidence>
<evidence type="ECO:0000269" key="14">
    <source>
    </source>
</evidence>
<evidence type="ECO:0000269" key="15">
    <source>
    </source>
</evidence>
<evidence type="ECO:0000269" key="16">
    <source>
    </source>
</evidence>
<evidence type="ECO:0000269" key="17">
    <source>
    </source>
</evidence>
<evidence type="ECO:0000269" key="18">
    <source>
    </source>
</evidence>
<evidence type="ECO:0000269" key="19">
    <source>
    </source>
</evidence>
<evidence type="ECO:0000269" key="20">
    <source>
    </source>
</evidence>
<evidence type="ECO:0000269" key="21">
    <source>
    </source>
</evidence>
<evidence type="ECO:0000269" key="22">
    <source>
    </source>
</evidence>
<evidence type="ECO:0000269" key="23">
    <source>
    </source>
</evidence>
<evidence type="ECO:0000269" key="24">
    <source>
    </source>
</evidence>
<evidence type="ECO:0000269" key="25">
    <source>
    </source>
</evidence>
<evidence type="ECO:0000269" key="26">
    <source>
    </source>
</evidence>
<evidence type="ECO:0000305" key="27"/>
<evidence type="ECO:0007744" key="28">
    <source>
    </source>
</evidence>
<proteinExistence type="evidence at protein level"/>
<protein>
    <recommendedName>
        <fullName>Ubiquitin carboxyl-terminal hydrolase 4</fullName>
        <ecNumber>3.4.19.12</ecNumber>
    </recommendedName>
    <alternativeName>
        <fullName>Deubiquitinating enzyme 4</fullName>
    </alternativeName>
    <alternativeName>
        <fullName>Ubiquitin thioesterase 4</fullName>
    </alternativeName>
    <alternativeName>
        <fullName>Ubiquitin-specific-processing protease 4</fullName>
    </alternativeName>
    <alternativeName>
        <fullName>Vacuole biogenesis protein SSV7</fullName>
    </alternativeName>
</protein>
<name>UBP4_YEAST</name>
<sequence>MEQNIISTIRDECIRHRSKYLTIAQLTAIAEAKINEFIITGKAKDQDLSSLLDKCIDILSIYKKNSKDIKNIISCKNKGAMISSNSVMIIQLNYVYYKVIHIIVTTNIPHLSEFAKIKLHKSTSDEGNGNNNNNEFQLMNIYNTLLETLLKDENIAKIKSFIKSSIKQTKLNHEQEECNLMRTGSYITSNQLNSLISSSANSASSQMEILLIDIRSRLEFNKSHIDTKNIICLEPISFKMSYSDHDLEKKSLITSPNSEIKMFQSRNLFKFIILYTDANEYNVKQQSVLLDILVNHSFEKPISDDFTKIFILESGFPGWLKSNYGRQVSSSFPSNNNIKDDSVYINGNTSGLSLQHLPKMSPSIRHSMDDSMKEMLVAPTPLNHLQQQQQQQSDNDHVLKRSSSFKKLFSNYTSPNPKNSNSNLYSISSLSISSSPSPLPLHSPDPVKGNSLPINYPETPHLWKNSETDFMTNQREQLNHNSFAHIAPINTKAITSPSRTATPKLQRFPQTISMNLNMNSNGHSSATSTIQPSCLSLSNNDSLDHTDVTPTSSHNYDLDFAVGLENLGNSCYMNCIIQCILGTHELTQIFLDDSYAKHININSKLGSKGILAKYFARLVHMMYKEQVDGSKKISISPIKFKLACGSVNSLFKTASQQDCQEFCQFLLDGLHEDLNQCGSNPPLKELSQEAEARREKLSLRIASSIEWERFLTTDFSVIVDLFQGQYASRLKCKVCSHTSTTYQPFTVLSIPIPKKNSRNNITIEDCFREFTKCENLEVDEQWLCPHCEKRQPSTKQLTITRLPRNLIVHLKRFDNLLNKNNDFVIYPFLLDLTPFWANDFDGVFPPGVNDDELPIRGQIPPFKYELYGVACHFGTLYGGHYTAYVKKGLKKGWLYFDDTKYKPVKNKADAINSNAYVLFYHRVYGV</sequence>
<dbReference type="EC" id="3.4.19.12"/>
<dbReference type="EMBL" id="U02518">
    <property type="protein sequence ID" value="AAC48915.1"/>
    <property type="molecule type" value="Genomic_DNA"/>
</dbReference>
<dbReference type="EMBL" id="L08070">
    <property type="protein sequence ID" value="AAA35105.1"/>
    <property type="molecule type" value="Genomic_DNA"/>
</dbReference>
<dbReference type="EMBL" id="Z49209">
    <property type="protein sequence ID" value="CAA89098.1"/>
    <property type="molecule type" value="Genomic_DNA"/>
</dbReference>
<dbReference type="EMBL" id="Z46796">
    <property type="protein sequence ID" value="CAA86791.1"/>
    <property type="molecule type" value="Genomic_DNA"/>
</dbReference>
<dbReference type="EMBL" id="Z74365">
    <property type="protein sequence ID" value="CAA98887.1"/>
    <property type="molecule type" value="Genomic_DNA"/>
</dbReference>
<dbReference type="EMBL" id="X84162">
    <property type="protein sequence ID" value="CAA58985.1"/>
    <property type="molecule type" value="Genomic_DNA"/>
</dbReference>
<dbReference type="EMBL" id="BK006938">
    <property type="protein sequence ID" value="DAA11915.1"/>
    <property type="molecule type" value="Genomic_DNA"/>
</dbReference>
<dbReference type="PIR" id="S39344">
    <property type="entry name" value="S39344"/>
</dbReference>
<dbReference type="RefSeq" id="NP_010354.3">
    <property type="nucleotide sequence ID" value="NM_001180377.3"/>
</dbReference>
<dbReference type="SMR" id="P32571"/>
<dbReference type="BioGRID" id="32124">
    <property type="interactions" value="302"/>
</dbReference>
<dbReference type="DIP" id="DIP-5298N"/>
<dbReference type="FunCoup" id="P32571">
    <property type="interactions" value="180"/>
</dbReference>
<dbReference type="IntAct" id="P32571">
    <property type="interactions" value="28"/>
</dbReference>
<dbReference type="MINT" id="P32571"/>
<dbReference type="STRING" id="4932.YDR069C"/>
<dbReference type="MEROPS" id="C19.005"/>
<dbReference type="TCDB" id="3.A.31.1.1">
    <property type="family name" value="the endosomal sorting complexes required for transport iii (escrt-iii) family"/>
</dbReference>
<dbReference type="CarbonylDB" id="P32571"/>
<dbReference type="GlyGen" id="P32571">
    <property type="glycosylation" value="1 site"/>
</dbReference>
<dbReference type="iPTMnet" id="P32571"/>
<dbReference type="PaxDb" id="4932-YDR069C"/>
<dbReference type="PeptideAtlas" id="P32571"/>
<dbReference type="EnsemblFungi" id="YDR069C_mRNA">
    <property type="protein sequence ID" value="YDR069C"/>
    <property type="gene ID" value="YDR069C"/>
</dbReference>
<dbReference type="GeneID" id="851641"/>
<dbReference type="KEGG" id="sce:YDR069C"/>
<dbReference type="AGR" id="SGD:S000002476"/>
<dbReference type="SGD" id="S000002476">
    <property type="gene designation" value="DOA4"/>
</dbReference>
<dbReference type="VEuPathDB" id="FungiDB:YDR069C"/>
<dbReference type="eggNOG" id="KOG1868">
    <property type="taxonomic scope" value="Eukaryota"/>
</dbReference>
<dbReference type="GeneTree" id="ENSGT00940000174852"/>
<dbReference type="HOGENOM" id="CLU_005922_1_0_1"/>
<dbReference type="InParanoid" id="P32571"/>
<dbReference type="OMA" id="SIEWERY"/>
<dbReference type="OrthoDB" id="292964at2759"/>
<dbReference type="BioCyc" id="YEAST:G3O-29676-MONOMER"/>
<dbReference type="BioGRID-ORCS" id="851641">
    <property type="hits" value="2 hits in 10 CRISPR screens"/>
</dbReference>
<dbReference type="PRO" id="PR:P32571"/>
<dbReference type="Proteomes" id="UP000002311">
    <property type="component" value="Chromosome IV"/>
</dbReference>
<dbReference type="RNAct" id="P32571">
    <property type="molecule type" value="protein"/>
</dbReference>
<dbReference type="GO" id="GO:0005829">
    <property type="term" value="C:cytosol"/>
    <property type="evidence" value="ECO:0007005"/>
    <property type="project" value="SGD"/>
</dbReference>
<dbReference type="GO" id="GO:0005768">
    <property type="term" value="C:endosome"/>
    <property type="evidence" value="ECO:0000314"/>
    <property type="project" value="SGD"/>
</dbReference>
<dbReference type="GO" id="GO:0031902">
    <property type="term" value="C:late endosome membrane"/>
    <property type="evidence" value="ECO:0007669"/>
    <property type="project" value="UniProtKB-SubCell"/>
</dbReference>
<dbReference type="GO" id="GO:0005739">
    <property type="term" value="C:mitochondrion"/>
    <property type="evidence" value="ECO:0007005"/>
    <property type="project" value="SGD"/>
</dbReference>
<dbReference type="GO" id="GO:0000502">
    <property type="term" value="C:proteasome complex"/>
    <property type="evidence" value="ECO:0000314"/>
    <property type="project" value="SGD"/>
</dbReference>
<dbReference type="GO" id="GO:0004843">
    <property type="term" value="F:cysteine-type deubiquitinase activity"/>
    <property type="evidence" value="ECO:0000314"/>
    <property type="project" value="SGD"/>
</dbReference>
<dbReference type="GO" id="GO:1904669">
    <property type="term" value="P:ATP export"/>
    <property type="evidence" value="ECO:0000315"/>
    <property type="project" value="SGD"/>
</dbReference>
<dbReference type="GO" id="GO:0006897">
    <property type="term" value="P:endocytosis"/>
    <property type="evidence" value="ECO:0000315"/>
    <property type="project" value="SGD"/>
</dbReference>
<dbReference type="GO" id="GO:0010995">
    <property type="term" value="P:free ubiquitin chain depolymerization"/>
    <property type="evidence" value="ECO:0000314"/>
    <property type="project" value="SGD"/>
</dbReference>
<dbReference type="GO" id="GO:0070676">
    <property type="term" value="P:intralumenal vesicle formation"/>
    <property type="evidence" value="ECO:0000316"/>
    <property type="project" value="SGD"/>
</dbReference>
<dbReference type="GO" id="GO:0016579">
    <property type="term" value="P:protein deubiquitination"/>
    <property type="evidence" value="ECO:0007669"/>
    <property type="project" value="InterPro"/>
</dbReference>
<dbReference type="GO" id="GO:0006275">
    <property type="term" value="P:regulation of DNA replication"/>
    <property type="evidence" value="ECO:0000315"/>
    <property type="project" value="SGD"/>
</dbReference>
<dbReference type="GO" id="GO:0010992">
    <property type="term" value="P:ubiquitin recycling"/>
    <property type="evidence" value="ECO:0000315"/>
    <property type="project" value="SGD"/>
</dbReference>
<dbReference type="GO" id="GO:0006511">
    <property type="term" value="P:ubiquitin-dependent protein catabolic process"/>
    <property type="evidence" value="ECO:0000315"/>
    <property type="project" value="SGD"/>
</dbReference>
<dbReference type="GO" id="GO:0043162">
    <property type="term" value="P:ubiquitin-dependent protein catabolic process via the multivesicular body sorting pathway"/>
    <property type="evidence" value="ECO:0000315"/>
    <property type="project" value="SGD"/>
</dbReference>
<dbReference type="CDD" id="cd02674">
    <property type="entry name" value="Peptidase_C19R"/>
    <property type="match status" value="1"/>
</dbReference>
<dbReference type="FunFam" id="3.90.70.10:FF:000115">
    <property type="entry name" value="DOA4p Ubiquitin hydrolase"/>
    <property type="match status" value="1"/>
</dbReference>
<dbReference type="Gene3D" id="3.90.70.10">
    <property type="entry name" value="Cysteine proteinases"/>
    <property type="match status" value="1"/>
</dbReference>
<dbReference type="Gene3D" id="3.40.250.10">
    <property type="entry name" value="Rhodanese-like domain"/>
    <property type="match status" value="1"/>
</dbReference>
<dbReference type="InterPro" id="IPR038765">
    <property type="entry name" value="Papain-like_cys_pep_sf"/>
</dbReference>
<dbReference type="InterPro" id="IPR001394">
    <property type="entry name" value="Peptidase_C19_UCH"/>
</dbReference>
<dbReference type="InterPro" id="IPR001763">
    <property type="entry name" value="Rhodanese-like_dom"/>
</dbReference>
<dbReference type="InterPro" id="IPR036873">
    <property type="entry name" value="Rhodanese-like_dom_sf"/>
</dbReference>
<dbReference type="InterPro" id="IPR050185">
    <property type="entry name" value="Ub_carboxyl-term_hydrolase"/>
</dbReference>
<dbReference type="InterPro" id="IPR018200">
    <property type="entry name" value="USP_CS"/>
</dbReference>
<dbReference type="InterPro" id="IPR028889">
    <property type="entry name" value="USP_dom"/>
</dbReference>
<dbReference type="PANTHER" id="PTHR21646">
    <property type="entry name" value="UBIQUITIN CARBOXYL-TERMINAL HYDROLASE"/>
    <property type="match status" value="1"/>
</dbReference>
<dbReference type="PANTHER" id="PTHR21646:SF95">
    <property type="entry name" value="UBIQUITIN CARBOXYL-TERMINAL HYDROLASE 4-RELATED"/>
    <property type="match status" value="1"/>
</dbReference>
<dbReference type="Pfam" id="PF00581">
    <property type="entry name" value="Rhodanese"/>
    <property type="match status" value="1"/>
</dbReference>
<dbReference type="Pfam" id="PF00443">
    <property type="entry name" value="UCH"/>
    <property type="match status" value="1"/>
</dbReference>
<dbReference type="SMART" id="SM00450">
    <property type="entry name" value="RHOD"/>
    <property type="match status" value="1"/>
</dbReference>
<dbReference type="SUPFAM" id="SSF54001">
    <property type="entry name" value="Cysteine proteinases"/>
    <property type="match status" value="1"/>
</dbReference>
<dbReference type="SUPFAM" id="SSF52821">
    <property type="entry name" value="Rhodanese/Cell cycle control phosphatase"/>
    <property type="match status" value="1"/>
</dbReference>
<dbReference type="PROSITE" id="PS50206">
    <property type="entry name" value="RHODANESE_3"/>
    <property type="match status" value="1"/>
</dbReference>
<dbReference type="PROSITE" id="PS00972">
    <property type="entry name" value="USP_1"/>
    <property type="match status" value="1"/>
</dbReference>
<dbReference type="PROSITE" id="PS00973">
    <property type="entry name" value="USP_2"/>
    <property type="match status" value="1"/>
</dbReference>
<dbReference type="PROSITE" id="PS50235">
    <property type="entry name" value="USP_3"/>
    <property type="match status" value="1"/>
</dbReference>
<gene>
    <name type="primary">DOA4</name>
    <name type="synonym">DOS1</name>
    <name type="synonym">MUT4</name>
    <name type="synonym">NPI2</name>
    <name type="synonym">SSV7</name>
    <name type="synonym">UBP4</name>
    <name type="ordered locus">YDR069C</name>
    <name type="ORF">D4270</name>
    <name type="ORF">YD8554.02C</name>
    <name type="ORF">YD9609.23C</name>
</gene>
<organism>
    <name type="scientific">Saccharomyces cerevisiae (strain ATCC 204508 / S288c)</name>
    <name type="common">Baker's yeast</name>
    <dbReference type="NCBI Taxonomy" id="559292"/>
    <lineage>
        <taxon>Eukaryota</taxon>
        <taxon>Fungi</taxon>
        <taxon>Dikarya</taxon>
        <taxon>Ascomycota</taxon>
        <taxon>Saccharomycotina</taxon>
        <taxon>Saccharomycetes</taxon>
        <taxon>Saccharomycetales</taxon>
        <taxon>Saccharomycetaceae</taxon>
        <taxon>Saccharomyces</taxon>
    </lineage>
</organism>